<protein>
    <recommendedName>
        <fullName evidence="1">3-dehydroquinate synthase</fullName>
        <shortName evidence="1">DHQS</shortName>
        <ecNumber evidence="1">4.2.3.4</ecNumber>
    </recommendedName>
</protein>
<organism>
    <name type="scientific">Methylococcus capsulatus (strain ATCC 33009 / NCIMB 11132 / Bath)</name>
    <dbReference type="NCBI Taxonomy" id="243233"/>
    <lineage>
        <taxon>Bacteria</taxon>
        <taxon>Pseudomonadati</taxon>
        <taxon>Pseudomonadota</taxon>
        <taxon>Gammaproteobacteria</taxon>
        <taxon>Methylococcales</taxon>
        <taxon>Methylococcaceae</taxon>
        <taxon>Methylococcus</taxon>
    </lineage>
</organism>
<comment type="function">
    <text evidence="1">Catalyzes the conversion of 3-deoxy-D-arabino-heptulosonate 7-phosphate (DAHP) to dehydroquinate (DHQ).</text>
</comment>
<comment type="catalytic activity">
    <reaction evidence="1">
        <text>7-phospho-2-dehydro-3-deoxy-D-arabino-heptonate = 3-dehydroquinate + phosphate</text>
        <dbReference type="Rhea" id="RHEA:21968"/>
        <dbReference type="ChEBI" id="CHEBI:32364"/>
        <dbReference type="ChEBI" id="CHEBI:43474"/>
        <dbReference type="ChEBI" id="CHEBI:58394"/>
        <dbReference type="EC" id="4.2.3.4"/>
    </reaction>
</comment>
<comment type="cofactor">
    <cofactor evidence="1">
        <name>Co(2+)</name>
        <dbReference type="ChEBI" id="CHEBI:48828"/>
    </cofactor>
    <cofactor evidence="1">
        <name>Zn(2+)</name>
        <dbReference type="ChEBI" id="CHEBI:29105"/>
    </cofactor>
    <text evidence="1">Binds 1 divalent metal cation per subunit. Can use either Co(2+) or Zn(2+).</text>
</comment>
<comment type="cofactor">
    <cofactor evidence="1">
        <name>NAD(+)</name>
        <dbReference type="ChEBI" id="CHEBI:57540"/>
    </cofactor>
</comment>
<comment type="pathway">
    <text evidence="1">Metabolic intermediate biosynthesis; chorismate biosynthesis; chorismate from D-erythrose 4-phosphate and phosphoenolpyruvate: step 2/7.</text>
</comment>
<comment type="subcellular location">
    <subcellularLocation>
        <location evidence="1">Cytoplasm</location>
    </subcellularLocation>
</comment>
<comment type="similarity">
    <text evidence="1">Belongs to the sugar phosphate cyclases superfamily. Dehydroquinate synthase family.</text>
</comment>
<keyword id="KW-0028">Amino-acid biosynthesis</keyword>
<keyword id="KW-0057">Aromatic amino acid biosynthesis</keyword>
<keyword id="KW-0170">Cobalt</keyword>
<keyword id="KW-0963">Cytoplasm</keyword>
<keyword id="KW-0456">Lyase</keyword>
<keyword id="KW-0479">Metal-binding</keyword>
<keyword id="KW-0520">NAD</keyword>
<keyword id="KW-0547">Nucleotide-binding</keyword>
<keyword id="KW-1185">Reference proteome</keyword>
<keyword id="KW-0862">Zinc</keyword>
<sequence length="359" mass="38478">MKTLHVELGERGYPIYIGRGLLGHPDLIQAHLPGGQVLVVTNEVVAPLYLDRMLASLAGKDTGSVVLPDGEAHKTLDSAMAVFDALLARRFGRNAAIVALGGGVIGDLAGFAAACYQRGVPFIQVPTTLLSQVDSSVGGKTAVNHPRGKNMIGAFYQPRCVLADTDTLDTLPDRELSAGLAEVIKYGFIRDPEFLAWLEANVERLLQRDPEALAYAIERSCINKAEIVAEDETETGVRATLNLGHTFGHAIETGMGYGVCLHGEAVAIGMCQAADLSRRLGWIGDDEVARVIRLLERARLPVVPPRELDADAFLEHMAVDKKNVDGGLRLVLLKSLGEATLPVAVDAGLLRATLECYGR</sequence>
<gene>
    <name evidence="1" type="primary">aroB</name>
    <name type="ordered locus">MCA0331</name>
</gene>
<evidence type="ECO:0000255" key="1">
    <source>
        <dbReference type="HAMAP-Rule" id="MF_00110"/>
    </source>
</evidence>
<accession>Q60BY2</accession>
<name>AROB_METCA</name>
<reference key="1">
    <citation type="journal article" date="2004" name="PLoS Biol.">
        <title>Genomic insights into methanotrophy: the complete genome sequence of Methylococcus capsulatus (Bath).</title>
        <authorList>
            <person name="Ward N.L."/>
            <person name="Larsen O."/>
            <person name="Sakwa J."/>
            <person name="Bruseth L."/>
            <person name="Khouri H.M."/>
            <person name="Durkin A.S."/>
            <person name="Dimitrov G."/>
            <person name="Jiang L."/>
            <person name="Scanlan D."/>
            <person name="Kang K.H."/>
            <person name="Lewis M.R."/>
            <person name="Nelson K.E."/>
            <person name="Methe B.A."/>
            <person name="Wu M."/>
            <person name="Heidelberg J.F."/>
            <person name="Paulsen I.T."/>
            <person name="Fouts D.E."/>
            <person name="Ravel J."/>
            <person name="Tettelin H."/>
            <person name="Ren Q."/>
            <person name="Read T.D."/>
            <person name="DeBoy R.T."/>
            <person name="Seshadri R."/>
            <person name="Salzberg S.L."/>
            <person name="Jensen H.B."/>
            <person name="Birkeland N.K."/>
            <person name="Nelson W.C."/>
            <person name="Dodson R.J."/>
            <person name="Grindhaug S.H."/>
            <person name="Holt I.E."/>
            <person name="Eidhammer I."/>
            <person name="Jonasen I."/>
            <person name="Vanaken S."/>
            <person name="Utterback T.R."/>
            <person name="Feldblyum T.V."/>
            <person name="Fraser C.M."/>
            <person name="Lillehaug J.R."/>
            <person name="Eisen J.A."/>
        </authorList>
    </citation>
    <scope>NUCLEOTIDE SEQUENCE [LARGE SCALE GENOMIC DNA]</scope>
    <source>
        <strain>ATCC 33009 / NCIMB 11132 / Bath</strain>
    </source>
</reference>
<feature type="chain" id="PRO_0000231098" description="3-dehydroquinate synthase">
    <location>
        <begin position="1"/>
        <end position="359"/>
    </location>
</feature>
<feature type="binding site" evidence="1">
    <location>
        <begin position="69"/>
        <end position="74"/>
    </location>
    <ligand>
        <name>NAD(+)</name>
        <dbReference type="ChEBI" id="CHEBI:57540"/>
    </ligand>
</feature>
<feature type="binding site" evidence="1">
    <location>
        <begin position="103"/>
        <end position="107"/>
    </location>
    <ligand>
        <name>NAD(+)</name>
        <dbReference type="ChEBI" id="CHEBI:57540"/>
    </ligand>
</feature>
<feature type="binding site" evidence="1">
    <location>
        <begin position="127"/>
        <end position="128"/>
    </location>
    <ligand>
        <name>NAD(+)</name>
        <dbReference type="ChEBI" id="CHEBI:57540"/>
    </ligand>
</feature>
<feature type="binding site" evidence="1">
    <location>
        <position position="140"/>
    </location>
    <ligand>
        <name>NAD(+)</name>
        <dbReference type="ChEBI" id="CHEBI:57540"/>
    </ligand>
</feature>
<feature type="binding site" evidence="1">
    <location>
        <position position="149"/>
    </location>
    <ligand>
        <name>NAD(+)</name>
        <dbReference type="ChEBI" id="CHEBI:57540"/>
    </ligand>
</feature>
<feature type="binding site" evidence="1">
    <location>
        <begin position="167"/>
        <end position="170"/>
    </location>
    <ligand>
        <name>NAD(+)</name>
        <dbReference type="ChEBI" id="CHEBI:57540"/>
    </ligand>
</feature>
<feature type="binding site" evidence="1">
    <location>
        <position position="182"/>
    </location>
    <ligand>
        <name>Zn(2+)</name>
        <dbReference type="ChEBI" id="CHEBI:29105"/>
    </ligand>
</feature>
<feature type="binding site" evidence="1">
    <location>
        <position position="245"/>
    </location>
    <ligand>
        <name>Zn(2+)</name>
        <dbReference type="ChEBI" id="CHEBI:29105"/>
    </ligand>
</feature>
<feature type="binding site" evidence="1">
    <location>
        <position position="262"/>
    </location>
    <ligand>
        <name>Zn(2+)</name>
        <dbReference type="ChEBI" id="CHEBI:29105"/>
    </ligand>
</feature>
<proteinExistence type="inferred from homology"/>
<dbReference type="EC" id="4.2.3.4" evidence="1"/>
<dbReference type="EMBL" id="AE017282">
    <property type="protein sequence ID" value="AAU90400.1"/>
    <property type="molecule type" value="Genomic_DNA"/>
</dbReference>
<dbReference type="RefSeq" id="WP_010959692.1">
    <property type="nucleotide sequence ID" value="NC_002977.6"/>
</dbReference>
<dbReference type="SMR" id="Q60BY2"/>
<dbReference type="STRING" id="243233.MCA0331"/>
<dbReference type="GeneID" id="88222672"/>
<dbReference type="KEGG" id="mca:MCA0331"/>
<dbReference type="eggNOG" id="COG0337">
    <property type="taxonomic scope" value="Bacteria"/>
</dbReference>
<dbReference type="HOGENOM" id="CLU_001201_0_2_6"/>
<dbReference type="UniPathway" id="UPA00053">
    <property type="reaction ID" value="UER00085"/>
</dbReference>
<dbReference type="Proteomes" id="UP000006821">
    <property type="component" value="Chromosome"/>
</dbReference>
<dbReference type="GO" id="GO:0005737">
    <property type="term" value="C:cytoplasm"/>
    <property type="evidence" value="ECO:0007669"/>
    <property type="project" value="UniProtKB-SubCell"/>
</dbReference>
<dbReference type="GO" id="GO:0003856">
    <property type="term" value="F:3-dehydroquinate synthase activity"/>
    <property type="evidence" value="ECO:0007669"/>
    <property type="project" value="UniProtKB-UniRule"/>
</dbReference>
<dbReference type="GO" id="GO:0046872">
    <property type="term" value="F:metal ion binding"/>
    <property type="evidence" value="ECO:0007669"/>
    <property type="project" value="UniProtKB-KW"/>
</dbReference>
<dbReference type="GO" id="GO:0000166">
    <property type="term" value="F:nucleotide binding"/>
    <property type="evidence" value="ECO:0007669"/>
    <property type="project" value="UniProtKB-KW"/>
</dbReference>
<dbReference type="GO" id="GO:0008652">
    <property type="term" value="P:amino acid biosynthetic process"/>
    <property type="evidence" value="ECO:0007669"/>
    <property type="project" value="UniProtKB-KW"/>
</dbReference>
<dbReference type="GO" id="GO:0009073">
    <property type="term" value="P:aromatic amino acid family biosynthetic process"/>
    <property type="evidence" value="ECO:0007669"/>
    <property type="project" value="UniProtKB-KW"/>
</dbReference>
<dbReference type="GO" id="GO:0009423">
    <property type="term" value="P:chorismate biosynthetic process"/>
    <property type="evidence" value="ECO:0007669"/>
    <property type="project" value="UniProtKB-UniRule"/>
</dbReference>
<dbReference type="CDD" id="cd08195">
    <property type="entry name" value="DHQS"/>
    <property type="match status" value="1"/>
</dbReference>
<dbReference type="FunFam" id="1.20.1090.10:FF:000002">
    <property type="entry name" value="3-dehydroquinate synthase"/>
    <property type="match status" value="1"/>
</dbReference>
<dbReference type="FunFam" id="3.40.50.1970:FF:000001">
    <property type="entry name" value="3-dehydroquinate synthase"/>
    <property type="match status" value="1"/>
</dbReference>
<dbReference type="Gene3D" id="3.40.50.1970">
    <property type="match status" value="1"/>
</dbReference>
<dbReference type="Gene3D" id="1.20.1090.10">
    <property type="entry name" value="Dehydroquinate synthase-like - alpha domain"/>
    <property type="match status" value="1"/>
</dbReference>
<dbReference type="HAMAP" id="MF_00110">
    <property type="entry name" value="DHQ_synthase"/>
    <property type="match status" value="1"/>
</dbReference>
<dbReference type="InterPro" id="IPR050071">
    <property type="entry name" value="Dehydroquinate_synthase"/>
</dbReference>
<dbReference type="InterPro" id="IPR016037">
    <property type="entry name" value="DHQ_synth_AroB"/>
</dbReference>
<dbReference type="InterPro" id="IPR030963">
    <property type="entry name" value="DHQ_synth_fam"/>
</dbReference>
<dbReference type="InterPro" id="IPR030960">
    <property type="entry name" value="DHQS/DOIS_N"/>
</dbReference>
<dbReference type="InterPro" id="IPR056179">
    <property type="entry name" value="DHQS_C"/>
</dbReference>
<dbReference type="NCBIfam" id="TIGR01357">
    <property type="entry name" value="aroB"/>
    <property type="match status" value="1"/>
</dbReference>
<dbReference type="PANTHER" id="PTHR43622">
    <property type="entry name" value="3-DEHYDROQUINATE SYNTHASE"/>
    <property type="match status" value="1"/>
</dbReference>
<dbReference type="PANTHER" id="PTHR43622:SF7">
    <property type="entry name" value="3-DEHYDROQUINATE SYNTHASE, CHLOROPLASTIC"/>
    <property type="match status" value="1"/>
</dbReference>
<dbReference type="Pfam" id="PF01761">
    <property type="entry name" value="DHQ_synthase"/>
    <property type="match status" value="1"/>
</dbReference>
<dbReference type="Pfam" id="PF24621">
    <property type="entry name" value="DHQS_C"/>
    <property type="match status" value="1"/>
</dbReference>
<dbReference type="PIRSF" id="PIRSF001455">
    <property type="entry name" value="DHQ_synth"/>
    <property type="match status" value="1"/>
</dbReference>
<dbReference type="SUPFAM" id="SSF56796">
    <property type="entry name" value="Dehydroquinate synthase-like"/>
    <property type="match status" value="1"/>
</dbReference>